<sequence>MNINLTLIGQAIAFAFFVAFCMKFVWPPLINAISERQRKIADGLNAAEKAKADLADAQAQVKQELDAAKAQAAQLIEQANRRAAQLIEEARTQAAAEGERIRQQAKEAVDQEINSAREELRQQVAALVVTGAEKILNQQVDAEAHNAMLSQLAAKL</sequence>
<reference key="1">
    <citation type="journal article" date="2008" name="PLoS ONE">
        <title>Comparative analysis of Acinetobacters: three genomes for three lifestyles.</title>
        <authorList>
            <person name="Vallenet D."/>
            <person name="Nordmann P."/>
            <person name="Barbe V."/>
            <person name="Poirel L."/>
            <person name="Mangenot S."/>
            <person name="Bataille E."/>
            <person name="Dossat C."/>
            <person name="Gas S."/>
            <person name="Kreimeyer A."/>
            <person name="Lenoble P."/>
            <person name="Oztas S."/>
            <person name="Poulain J."/>
            <person name="Segurens B."/>
            <person name="Robert C."/>
            <person name="Abergel C."/>
            <person name="Claverie J.-M."/>
            <person name="Raoult D."/>
            <person name="Medigue C."/>
            <person name="Weissenbach J."/>
            <person name="Cruveiller S."/>
        </authorList>
    </citation>
    <scope>NUCLEOTIDE SEQUENCE [LARGE SCALE GENOMIC DNA]</scope>
    <source>
        <strain>SDF</strain>
    </source>
</reference>
<feature type="chain" id="PRO_0000368293" description="ATP synthase subunit b">
    <location>
        <begin position="1"/>
        <end position="156"/>
    </location>
</feature>
<feature type="transmembrane region" description="Helical" evidence="1">
    <location>
        <begin position="5"/>
        <end position="25"/>
    </location>
</feature>
<protein>
    <recommendedName>
        <fullName evidence="1">ATP synthase subunit b</fullName>
    </recommendedName>
    <alternativeName>
        <fullName evidence="1">ATP synthase F(0) sector subunit b</fullName>
    </alternativeName>
    <alternativeName>
        <fullName evidence="1">ATPase subunit I</fullName>
    </alternativeName>
    <alternativeName>
        <fullName evidence="1">F-type ATPase subunit b</fullName>
        <shortName evidence="1">F-ATPase subunit b</shortName>
    </alternativeName>
</protein>
<comment type="function">
    <text evidence="1">F(1)F(0) ATP synthase produces ATP from ADP in the presence of a proton or sodium gradient. F-type ATPases consist of two structural domains, F(1) containing the extramembraneous catalytic core and F(0) containing the membrane proton channel, linked together by a central stalk and a peripheral stalk. During catalysis, ATP synthesis in the catalytic domain of F(1) is coupled via a rotary mechanism of the central stalk subunits to proton translocation.</text>
</comment>
<comment type="function">
    <text evidence="1">Component of the F(0) channel, it forms part of the peripheral stalk, linking F(1) to F(0).</text>
</comment>
<comment type="subunit">
    <text evidence="1">F-type ATPases have 2 components, F(1) - the catalytic core - and F(0) - the membrane proton channel. F(1) has five subunits: alpha(3), beta(3), gamma(1), delta(1), epsilon(1). F(0) has three main subunits: a(1), b(2) and c(10-14). The alpha and beta chains form an alternating ring which encloses part of the gamma chain. F(1) is attached to F(0) by a central stalk formed by the gamma and epsilon chains, while a peripheral stalk is formed by the delta and b chains.</text>
</comment>
<comment type="subcellular location">
    <subcellularLocation>
        <location evidence="1">Cell inner membrane</location>
        <topology evidence="1">Single-pass membrane protein</topology>
    </subcellularLocation>
</comment>
<comment type="similarity">
    <text evidence="1">Belongs to the ATPase B chain family.</text>
</comment>
<gene>
    <name evidence="1" type="primary">atpF</name>
    <name type="ordered locus">ABSDF0166</name>
</gene>
<proteinExistence type="inferred from homology"/>
<organism>
    <name type="scientific">Acinetobacter baumannii (strain SDF)</name>
    <dbReference type="NCBI Taxonomy" id="509170"/>
    <lineage>
        <taxon>Bacteria</taxon>
        <taxon>Pseudomonadati</taxon>
        <taxon>Pseudomonadota</taxon>
        <taxon>Gammaproteobacteria</taxon>
        <taxon>Moraxellales</taxon>
        <taxon>Moraxellaceae</taxon>
        <taxon>Acinetobacter</taxon>
        <taxon>Acinetobacter calcoaceticus/baumannii complex</taxon>
    </lineage>
</organism>
<accession>B0VNK0</accession>
<name>ATPF_ACIBS</name>
<dbReference type="EMBL" id="CU468230">
    <property type="protein sequence ID" value="CAO99570.1"/>
    <property type="molecule type" value="Genomic_DNA"/>
</dbReference>
<dbReference type="SMR" id="B0VNK0"/>
<dbReference type="KEGG" id="abm:ABSDF0166"/>
<dbReference type="HOGENOM" id="CLU_079215_4_5_6"/>
<dbReference type="Proteomes" id="UP000001741">
    <property type="component" value="Chromosome"/>
</dbReference>
<dbReference type="GO" id="GO:0005886">
    <property type="term" value="C:plasma membrane"/>
    <property type="evidence" value="ECO:0007669"/>
    <property type="project" value="UniProtKB-SubCell"/>
</dbReference>
<dbReference type="GO" id="GO:0045259">
    <property type="term" value="C:proton-transporting ATP synthase complex"/>
    <property type="evidence" value="ECO:0007669"/>
    <property type="project" value="UniProtKB-KW"/>
</dbReference>
<dbReference type="GO" id="GO:0046933">
    <property type="term" value="F:proton-transporting ATP synthase activity, rotational mechanism"/>
    <property type="evidence" value="ECO:0007669"/>
    <property type="project" value="UniProtKB-UniRule"/>
</dbReference>
<dbReference type="GO" id="GO:0046961">
    <property type="term" value="F:proton-transporting ATPase activity, rotational mechanism"/>
    <property type="evidence" value="ECO:0007669"/>
    <property type="project" value="TreeGrafter"/>
</dbReference>
<dbReference type="CDD" id="cd06503">
    <property type="entry name" value="ATP-synt_Fo_b"/>
    <property type="match status" value="1"/>
</dbReference>
<dbReference type="Gene3D" id="6.10.250.1580">
    <property type="match status" value="1"/>
</dbReference>
<dbReference type="HAMAP" id="MF_01398">
    <property type="entry name" value="ATP_synth_b_bprime"/>
    <property type="match status" value="1"/>
</dbReference>
<dbReference type="InterPro" id="IPR028987">
    <property type="entry name" value="ATP_synth_B-like_membr_sf"/>
</dbReference>
<dbReference type="InterPro" id="IPR002146">
    <property type="entry name" value="ATP_synth_b/b'su_bac/chlpt"/>
</dbReference>
<dbReference type="InterPro" id="IPR005864">
    <property type="entry name" value="ATP_synth_F0_bsu_bac"/>
</dbReference>
<dbReference type="InterPro" id="IPR050059">
    <property type="entry name" value="ATP_synthase_B_chain"/>
</dbReference>
<dbReference type="NCBIfam" id="TIGR01144">
    <property type="entry name" value="ATP_synt_b"/>
    <property type="match status" value="1"/>
</dbReference>
<dbReference type="NCBIfam" id="NF004411">
    <property type="entry name" value="PRK05759.1-2"/>
    <property type="match status" value="1"/>
</dbReference>
<dbReference type="PANTHER" id="PTHR33445:SF1">
    <property type="entry name" value="ATP SYNTHASE SUBUNIT B"/>
    <property type="match status" value="1"/>
</dbReference>
<dbReference type="PANTHER" id="PTHR33445">
    <property type="entry name" value="ATP SYNTHASE SUBUNIT B', CHLOROPLASTIC"/>
    <property type="match status" value="1"/>
</dbReference>
<dbReference type="Pfam" id="PF00430">
    <property type="entry name" value="ATP-synt_B"/>
    <property type="match status" value="1"/>
</dbReference>
<dbReference type="SUPFAM" id="SSF81573">
    <property type="entry name" value="F1F0 ATP synthase subunit B, membrane domain"/>
    <property type="match status" value="1"/>
</dbReference>
<evidence type="ECO:0000255" key="1">
    <source>
        <dbReference type="HAMAP-Rule" id="MF_01398"/>
    </source>
</evidence>
<keyword id="KW-0066">ATP synthesis</keyword>
<keyword id="KW-0997">Cell inner membrane</keyword>
<keyword id="KW-1003">Cell membrane</keyword>
<keyword id="KW-0138">CF(0)</keyword>
<keyword id="KW-0375">Hydrogen ion transport</keyword>
<keyword id="KW-0406">Ion transport</keyword>
<keyword id="KW-0472">Membrane</keyword>
<keyword id="KW-0812">Transmembrane</keyword>
<keyword id="KW-1133">Transmembrane helix</keyword>
<keyword id="KW-0813">Transport</keyword>